<name>RAB17_HUMAN</name>
<keyword id="KW-0025">Alternative splicing</keyword>
<keyword id="KW-0966">Cell projection</keyword>
<keyword id="KW-0967">Endosome</keyword>
<keyword id="KW-0342">GTP-binding</keyword>
<keyword id="KW-0378">Hydrolase</keyword>
<keyword id="KW-0449">Lipoprotein</keyword>
<keyword id="KW-0460">Magnesium</keyword>
<keyword id="KW-0472">Membrane</keyword>
<keyword id="KW-0479">Metal-binding</keyword>
<keyword id="KW-0547">Nucleotide-binding</keyword>
<keyword id="KW-0597">Phosphoprotein</keyword>
<keyword id="KW-0636">Prenylation</keyword>
<keyword id="KW-0653">Protein transport</keyword>
<keyword id="KW-1267">Proteomics identification</keyword>
<keyword id="KW-1185">Reference proteome</keyword>
<keyword id="KW-0813">Transport</keyword>
<accession>Q9H0T7</accession>
<accession>Q53QV6</accession>
<accession>Q6IA73</accession>
<accession>Q6PJZ0</accession>
<accession>Q9BVU1</accession>
<accession>Q9H9U9</accession>
<proteinExistence type="evidence at protein level"/>
<gene>
    <name evidence="11" type="primary">RAB17</name>
</gene>
<protein>
    <recommendedName>
        <fullName>Ras-related protein Rab-17</fullName>
        <ecNumber evidence="2">3.6.5.2</ecNumber>
    </recommendedName>
</protein>
<dbReference type="EC" id="3.6.5.2" evidence="2"/>
<dbReference type="EMBL" id="AL136645">
    <property type="protein sequence ID" value="CAB66580.1"/>
    <property type="molecule type" value="mRNA"/>
</dbReference>
<dbReference type="EMBL" id="AK022600">
    <property type="protein sequence ID" value="BAB14121.1"/>
    <property type="molecule type" value="mRNA"/>
</dbReference>
<dbReference type="EMBL" id="CR457282">
    <property type="protein sequence ID" value="CAG33563.1"/>
    <property type="molecule type" value="mRNA"/>
</dbReference>
<dbReference type="EMBL" id="AC104667">
    <property type="protein sequence ID" value="AAY24047.1"/>
    <property type="molecule type" value="Genomic_DNA"/>
</dbReference>
<dbReference type="EMBL" id="CH471063">
    <property type="protein sequence ID" value="EAW71118.1"/>
    <property type="molecule type" value="Genomic_DNA"/>
</dbReference>
<dbReference type="EMBL" id="CH471063">
    <property type="protein sequence ID" value="EAW71119.1"/>
    <property type="molecule type" value="Genomic_DNA"/>
</dbReference>
<dbReference type="EMBL" id="BC000929">
    <property type="protein sequence ID" value="AAH00929.1"/>
    <property type="molecule type" value="mRNA"/>
</dbReference>
<dbReference type="EMBL" id="BC050426">
    <property type="protein sequence ID" value="AAH50426.1"/>
    <property type="molecule type" value="mRNA"/>
</dbReference>
<dbReference type="EMBL" id="BC007907">
    <property type="protein sequence ID" value="AAH07907.1"/>
    <property type="molecule type" value="mRNA"/>
</dbReference>
<dbReference type="EMBL" id="BC009827">
    <property type="protein sequence ID" value="AAH09827.1"/>
    <property type="molecule type" value="mRNA"/>
</dbReference>
<dbReference type="CCDS" id="CCDS2520.1">
    <molecule id="Q9H0T7-1"/>
</dbReference>
<dbReference type="RefSeq" id="NP_071894.1">
    <molecule id="Q9H0T7-1"/>
    <property type="nucleotide sequence ID" value="NM_022449.4"/>
</dbReference>
<dbReference type="SMR" id="Q9H0T7"/>
<dbReference type="BioGRID" id="122128">
    <property type="interactions" value="40"/>
</dbReference>
<dbReference type="FunCoup" id="Q9H0T7">
    <property type="interactions" value="198"/>
</dbReference>
<dbReference type="IntAct" id="Q9H0T7">
    <property type="interactions" value="14"/>
</dbReference>
<dbReference type="STRING" id="9606.ENSP00000264601"/>
<dbReference type="GlyGen" id="Q9H0T7">
    <property type="glycosylation" value="1 site"/>
</dbReference>
<dbReference type="iPTMnet" id="Q9H0T7"/>
<dbReference type="PhosphoSitePlus" id="Q9H0T7"/>
<dbReference type="BioMuta" id="RAB17"/>
<dbReference type="DMDM" id="37999892"/>
<dbReference type="jPOST" id="Q9H0T7"/>
<dbReference type="MassIVE" id="Q9H0T7"/>
<dbReference type="PaxDb" id="9606-ENSP00000264601"/>
<dbReference type="PeptideAtlas" id="Q9H0T7"/>
<dbReference type="ProteomicsDB" id="67228"/>
<dbReference type="ProteomicsDB" id="80323">
    <molecule id="Q9H0T7-1"/>
</dbReference>
<dbReference type="Pumba" id="Q9H0T7"/>
<dbReference type="Antibodypedia" id="34483">
    <property type="antibodies" value="278 antibodies from 30 providers"/>
</dbReference>
<dbReference type="DNASU" id="64284"/>
<dbReference type="Ensembl" id="ENST00000264601.8">
    <molecule id="Q9H0T7-1"/>
    <property type="protein sequence ID" value="ENSP00000264601.3"/>
    <property type="gene ID" value="ENSG00000124839.13"/>
</dbReference>
<dbReference type="Ensembl" id="ENST00000409822.1">
    <molecule id="Q9H0T7-2"/>
    <property type="protein sequence ID" value="ENSP00000386589.1"/>
    <property type="gene ID" value="ENSG00000124839.13"/>
</dbReference>
<dbReference type="GeneID" id="64284"/>
<dbReference type="KEGG" id="hsa:64284"/>
<dbReference type="MANE-Select" id="ENST00000264601.8">
    <property type="protein sequence ID" value="ENSP00000264601.3"/>
    <property type="RefSeq nucleotide sequence ID" value="NM_022449.4"/>
    <property type="RefSeq protein sequence ID" value="NP_071894.1"/>
</dbReference>
<dbReference type="UCSC" id="uc002vwz.3">
    <molecule id="Q9H0T7-1"/>
    <property type="organism name" value="human"/>
</dbReference>
<dbReference type="AGR" id="HGNC:16523"/>
<dbReference type="CTD" id="64284"/>
<dbReference type="DisGeNET" id="64284"/>
<dbReference type="GeneCards" id="RAB17"/>
<dbReference type="HGNC" id="HGNC:16523">
    <property type="gene designation" value="RAB17"/>
</dbReference>
<dbReference type="HPA" id="ENSG00000124839">
    <property type="expression patterns" value="Tissue enhanced (choroid plexus, intestine, liver)"/>
</dbReference>
<dbReference type="MIM" id="602206">
    <property type="type" value="gene"/>
</dbReference>
<dbReference type="neXtProt" id="NX_Q9H0T7"/>
<dbReference type="OpenTargets" id="ENSG00000124839"/>
<dbReference type="PharmGKB" id="PA34105"/>
<dbReference type="VEuPathDB" id="HostDB:ENSG00000124839"/>
<dbReference type="eggNOG" id="KOG0092">
    <property type="taxonomic scope" value="Eukaryota"/>
</dbReference>
<dbReference type="GeneTree" id="ENSGT00940000161839"/>
<dbReference type="HOGENOM" id="CLU_041217_10_2_1"/>
<dbReference type="InParanoid" id="Q9H0T7"/>
<dbReference type="OMA" id="SCCKVGP"/>
<dbReference type="OrthoDB" id="63533at2759"/>
<dbReference type="PAN-GO" id="Q9H0T7">
    <property type="GO annotations" value="9 GO annotations based on evolutionary models"/>
</dbReference>
<dbReference type="PhylomeDB" id="Q9H0T7"/>
<dbReference type="TreeFam" id="TF300199"/>
<dbReference type="PathwayCommons" id="Q9H0T7"/>
<dbReference type="Reactome" id="R-HSA-8873719">
    <property type="pathway name" value="RAB geranylgeranylation"/>
</dbReference>
<dbReference type="SignaLink" id="Q9H0T7"/>
<dbReference type="BioGRID-ORCS" id="64284">
    <property type="hits" value="13 hits in 1143 CRISPR screens"/>
</dbReference>
<dbReference type="ChiTaRS" id="RAB17">
    <property type="organism name" value="human"/>
</dbReference>
<dbReference type="GeneWiki" id="RAB17"/>
<dbReference type="GenomeRNAi" id="64284"/>
<dbReference type="Pharos" id="Q9H0T7">
    <property type="development level" value="Tbio"/>
</dbReference>
<dbReference type="PRO" id="PR:Q9H0T7"/>
<dbReference type="Proteomes" id="UP000005640">
    <property type="component" value="Chromosome 2"/>
</dbReference>
<dbReference type="RNAct" id="Q9H0T7">
    <property type="molecule type" value="protein"/>
</dbReference>
<dbReference type="Bgee" id="ENSG00000124839">
    <property type="expression patterns" value="Expressed in right lobe of liver and 132 other cell types or tissues"/>
</dbReference>
<dbReference type="ExpressionAtlas" id="Q9H0T7">
    <property type="expression patterns" value="baseline and differential"/>
</dbReference>
<dbReference type="GO" id="GO:0016324">
    <property type="term" value="C:apical plasma membrane"/>
    <property type="evidence" value="ECO:0000250"/>
    <property type="project" value="UniProtKB"/>
</dbReference>
<dbReference type="GO" id="GO:0016323">
    <property type="term" value="C:basolateral plasma membrane"/>
    <property type="evidence" value="ECO:0000250"/>
    <property type="project" value="UniProtKB"/>
</dbReference>
<dbReference type="GO" id="GO:0030425">
    <property type="term" value="C:dendrite"/>
    <property type="evidence" value="ECO:0000250"/>
    <property type="project" value="UniProtKB"/>
</dbReference>
<dbReference type="GO" id="GO:0032839">
    <property type="term" value="C:dendrite cytoplasm"/>
    <property type="evidence" value="ECO:0007669"/>
    <property type="project" value="GOC"/>
</dbReference>
<dbReference type="GO" id="GO:0005769">
    <property type="term" value="C:early endosome"/>
    <property type="evidence" value="ECO:0000318"/>
    <property type="project" value="GO_Central"/>
</dbReference>
<dbReference type="GO" id="GO:0030139">
    <property type="term" value="C:endocytic vesicle"/>
    <property type="evidence" value="ECO:0000314"/>
    <property type="project" value="UniProtKB"/>
</dbReference>
<dbReference type="GO" id="GO:0012505">
    <property type="term" value="C:endomembrane system"/>
    <property type="evidence" value="ECO:0000318"/>
    <property type="project" value="GO_Central"/>
</dbReference>
<dbReference type="GO" id="GO:0070062">
    <property type="term" value="C:extracellular exosome"/>
    <property type="evidence" value="ECO:0007005"/>
    <property type="project" value="UniProtKB"/>
</dbReference>
<dbReference type="GO" id="GO:0098978">
    <property type="term" value="C:glutamatergic synapse"/>
    <property type="evidence" value="ECO:0007669"/>
    <property type="project" value="Ensembl"/>
</dbReference>
<dbReference type="GO" id="GO:0042470">
    <property type="term" value="C:melanosome"/>
    <property type="evidence" value="ECO:0000250"/>
    <property type="project" value="UniProtKB"/>
</dbReference>
<dbReference type="GO" id="GO:0043025">
    <property type="term" value="C:neuronal cell body"/>
    <property type="evidence" value="ECO:0000250"/>
    <property type="project" value="UniProtKB"/>
</dbReference>
<dbReference type="GO" id="GO:0005886">
    <property type="term" value="C:plasma membrane"/>
    <property type="evidence" value="ECO:0000318"/>
    <property type="project" value="GO_Central"/>
</dbReference>
<dbReference type="GO" id="GO:0098794">
    <property type="term" value="C:postsynapse"/>
    <property type="evidence" value="ECO:0007669"/>
    <property type="project" value="Ensembl"/>
</dbReference>
<dbReference type="GO" id="GO:0055037">
    <property type="term" value="C:recycling endosome"/>
    <property type="evidence" value="ECO:0000250"/>
    <property type="project" value="UniProtKB"/>
</dbReference>
<dbReference type="GO" id="GO:0055038">
    <property type="term" value="C:recycling endosome membrane"/>
    <property type="evidence" value="ECO:0000250"/>
    <property type="project" value="UniProtKB"/>
</dbReference>
<dbReference type="GO" id="GO:0019003">
    <property type="term" value="F:GDP binding"/>
    <property type="evidence" value="ECO:0000314"/>
    <property type="project" value="UniProtKB"/>
</dbReference>
<dbReference type="GO" id="GO:0005525">
    <property type="term" value="F:GTP binding"/>
    <property type="evidence" value="ECO:0007669"/>
    <property type="project" value="UniProtKB-KW"/>
</dbReference>
<dbReference type="GO" id="GO:0003924">
    <property type="term" value="F:GTPase activity"/>
    <property type="evidence" value="ECO:0000314"/>
    <property type="project" value="UniProtKB"/>
</dbReference>
<dbReference type="GO" id="GO:0098937">
    <property type="term" value="P:anterograde dendritic transport"/>
    <property type="evidence" value="ECO:0007669"/>
    <property type="project" value="Ensembl"/>
</dbReference>
<dbReference type="GO" id="GO:0060271">
    <property type="term" value="P:cilium assembly"/>
    <property type="evidence" value="ECO:0000315"/>
    <property type="project" value="UniProtKB"/>
</dbReference>
<dbReference type="GO" id="GO:0032456">
    <property type="term" value="P:endocytic recycling"/>
    <property type="evidence" value="ECO:0000250"/>
    <property type="project" value="UniProtKB"/>
</dbReference>
<dbReference type="GO" id="GO:0032401">
    <property type="term" value="P:establishment of melanosome localization"/>
    <property type="evidence" value="ECO:0000250"/>
    <property type="project" value="UniProtKB"/>
</dbReference>
<dbReference type="GO" id="GO:0046847">
    <property type="term" value="P:filopodium assembly"/>
    <property type="evidence" value="ECO:0000250"/>
    <property type="project" value="UniProtKB"/>
</dbReference>
<dbReference type="GO" id="GO:0002415">
    <property type="term" value="P:immunoglobulin transcytosis in epithelial cells mediated by polymeric immunoglobulin receptor"/>
    <property type="evidence" value="ECO:0000250"/>
    <property type="project" value="UniProtKB"/>
</dbReference>
<dbReference type="GO" id="GO:0006886">
    <property type="term" value="P:intracellular protein transport"/>
    <property type="evidence" value="ECO:0000318"/>
    <property type="project" value="GO_Central"/>
</dbReference>
<dbReference type="GO" id="GO:0032402">
    <property type="term" value="P:melanosome transport"/>
    <property type="evidence" value="ECO:0000250"/>
    <property type="project" value="UniProtKB"/>
</dbReference>
<dbReference type="GO" id="GO:0050773">
    <property type="term" value="P:regulation of dendrite development"/>
    <property type="evidence" value="ECO:0000250"/>
    <property type="project" value="UniProtKB"/>
</dbReference>
<dbReference type="GO" id="GO:0051489">
    <property type="term" value="P:regulation of filopodium assembly"/>
    <property type="evidence" value="ECO:0000250"/>
    <property type="project" value="UniProtKB"/>
</dbReference>
<dbReference type="GO" id="GO:0051963">
    <property type="term" value="P:regulation of synapse assembly"/>
    <property type="evidence" value="ECO:0000250"/>
    <property type="project" value="UniProtKB"/>
</dbReference>
<dbReference type="GO" id="GO:0045056">
    <property type="term" value="P:transcytosis"/>
    <property type="evidence" value="ECO:0000250"/>
    <property type="project" value="UniProtKB"/>
</dbReference>
<dbReference type="CDD" id="cd01860">
    <property type="entry name" value="Rab5_related"/>
    <property type="match status" value="1"/>
</dbReference>
<dbReference type="FunFam" id="3.40.50.300:FF:001282">
    <property type="entry name" value="RAB17, member RAS oncogene family"/>
    <property type="match status" value="1"/>
</dbReference>
<dbReference type="Gene3D" id="3.40.50.300">
    <property type="entry name" value="P-loop containing nucleotide triphosphate hydrolases"/>
    <property type="match status" value="1"/>
</dbReference>
<dbReference type="InterPro" id="IPR027417">
    <property type="entry name" value="P-loop_NTPase"/>
</dbReference>
<dbReference type="InterPro" id="IPR050209">
    <property type="entry name" value="Rab_GTPases_membrane_traffic"/>
</dbReference>
<dbReference type="InterPro" id="IPR005225">
    <property type="entry name" value="Small_GTP-bd"/>
</dbReference>
<dbReference type="InterPro" id="IPR001806">
    <property type="entry name" value="Small_GTPase"/>
</dbReference>
<dbReference type="NCBIfam" id="TIGR00231">
    <property type="entry name" value="small_GTP"/>
    <property type="match status" value="1"/>
</dbReference>
<dbReference type="PANTHER" id="PTHR47979">
    <property type="entry name" value="DRAB11-RELATED"/>
    <property type="match status" value="1"/>
</dbReference>
<dbReference type="Pfam" id="PF00071">
    <property type="entry name" value="Ras"/>
    <property type="match status" value="1"/>
</dbReference>
<dbReference type="PRINTS" id="PR00449">
    <property type="entry name" value="RASTRNSFRMNG"/>
</dbReference>
<dbReference type="SMART" id="SM00175">
    <property type="entry name" value="RAB"/>
    <property type="match status" value="1"/>
</dbReference>
<dbReference type="SMART" id="SM00176">
    <property type="entry name" value="RAN"/>
    <property type="match status" value="1"/>
</dbReference>
<dbReference type="SMART" id="SM00173">
    <property type="entry name" value="RAS"/>
    <property type="match status" value="1"/>
</dbReference>
<dbReference type="SMART" id="SM00174">
    <property type="entry name" value="RHO"/>
    <property type="match status" value="1"/>
</dbReference>
<dbReference type="SUPFAM" id="SSF52540">
    <property type="entry name" value="P-loop containing nucleoside triphosphate hydrolases"/>
    <property type="match status" value="1"/>
</dbReference>
<dbReference type="PROSITE" id="PS51419">
    <property type="entry name" value="RAB"/>
    <property type="match status" value="1"/>
</dbReference>
<comment type="function">
    <text evidence="2 4 7">The small GTPases Rab are key regulators of intracellular membrane trafficking, from the formation of transport vesicles to their fusion with membranes. Rabs cycle between an inactive GDP-bound form and an active GTP-bound form that is able to recruit to membranes different set of downstream effectors directly responsible for vesicle formation, movement, tethering and fusion (By similarity). RAB17 is involved in transcytosis, the directed movement of endocytosed material through the cell and its exocytosis from the plasma membrane at the opposite side. Mainly observed in epithelial cells, transcytosis mediates for instance, the transcellular transport of immunoglobulins from the basolateral surface to the apical surface. Most probably controls membrane trafficking through apical recycling endosomes in a post-endocytic step of transcytosis. Required for melanosome transport and release from melanocytes, it also regulates dendrite and dendritic spine development (By similarity). May also play a role in cell migration (PubMed:22328529).</text>
</comment>
<comment type="catalytic activity">
    <reaction evidence="2">
        <text>GTP + H2O = GDP + phosphate + H(+)</text>
        <dbReference type="Rhea" id="RHEA:19669"/>
        <dbReference type="ChEBI" id="CHEBI:15377"/>
        <dbReference type="ChEBI" id="CHEBI:15378"/>
        <dbReference type="ChEBI" id="CHEBI:37565"/>
        <dbReference type="ChEBI" id="CHEBI:43474"/>
        <dbReference type="ChEBI" id="CHEBI:58189"/>
        <dbReference type="EC" id="3.6.5.2"/>
    </reaction>
    <physiologicalReaction direction="left-to-right" evidence="2">
        <dbReference type="Rhea" id="RHEA:19670"/>
    </physiologicalReaction>
</comment>
<comment type="cofactor">
    <cofactor evidence="2">
        <name>Mg(2+)</name>
        <dbReference type="ChEBI" id="CHEBI:18420"/>
    </cofactor>
</comment>
<comment type="activity regulation">
    <text evidence="10">Regulated by guanine nucleotide exchange factors (GEFs) which promote the exchange of bound GDP for free GTP. Regulated by GTPase activating proteins (GAPs) which increase the GTP hydrolysis activity. Inhibited by GDP dissociation inhibitors (GDIs).</text>
</comment>
<comment type="interaction">
    <interactant intactId="EBI-721615">
        <id>Q9H0T7</id>
    </interactant>
    <interactant intactId="EBI-12086950">
        <id>Q53S33</id>
        <label>BOLA3</label>
    </interactant>
    <organismsDiffer>false</organismsDiffer>
    <experiments>3</experiments>
</comment>
<comment type="interaction">
    <interactant intactId="EBI-721615">
        <id>Q9H0T7</id>
    </interactant>
    <interactant intactId="EBI-721300">
        <id>Q9H6J7</id>
        <label>CSTPP1</label>
    </interactant>
    <organismsDiffer>false</organismsDiffer>
    <experiments>3</experiments>
</comment>
<comment type="interaction">
    <interactant intactId="EBI-721615">
        <id>Q9H0T7</id>
    </interactant>
    <interactant intactId="EBI-10175124">
        <id>Q8IZU0</id>
        <label>FAM9B</label>
    </interactant>
    <organismsDiffer>false</organismsDiffer>
    <experiments>3</experiments>
</comment>
<comment type="interaction">
    <interactant intactId="EBI-721615">
        <id>Q9H0T7</id>
    </interactant>
    <interactant intactId="EBI-740978">
        <id>P43355</id>
        <label>MAGEA1</label>
    </interactant>
    <organismsDiffer>false</organismsDiffer>
    <experiments>3</experiments>
</comment>
<comment type="subcellular location">
    <subcellularLocation>
        <location evidence="4">Recycling endosome membrane</location>
        <topology evidence="10">Lipid-anchor</topology>
        <orientation evidence="10">Cytoplasmic side</orientation>
    </subcellularLocation>
    <subcellularLocation>
        <location evidence="4">Melanosome</location>
    </subcellularLocation>
    <subcellularLocation>
        <location evidence="4">Cell projection</location>
        <location evidence="4">Dendrite</location>
    </subcellularLocation>
    <text evidence="4">May also localize at the basolateral and apical plasma membrane. In neurons, localizes to the cell body and dendritic shaft and spine.</text>
</comment>
<comment type="alternative products">
    <event type="alternative splicing"/>
    <isoform>
        <id>Q9H0T7-1</id>
        <name>1</name>
        <sequence type="displayed"/>
    </isoform>
    <isoform>
        <id>Q9H0T7-2</id>
        <name>2</name>
        <sequence type="described" ref="VSP_056400"/>
    </isoform>
</comment>
<comment type="tissue specificity">
    <text evidence="6">Expressed in melanocytes (at protein level).</text>
</comment>
<comment type="induction">
    <text evidence="6">Up-regulated by forskolin probably through the transcription factor MITF.</text>
</comment>
<comment type="domain">
    <text evidence="3">Switch 1, switch 2 and the interswitch regions are characteristic of Rab GTPases and mediate the interactions with Rab downstream effectors. The switch regions undergo conformational changes upon nucleotide binding which drive interaction with specific sets of effector proteins, with most effectors only binding to GTP-bound Rab.</text>
</comment>
<comment type="similarity">
    <text evidence="10">Belongs to the small GTPase superfamily. Rab family.</text>
</comment>
<feature type="chain" id="PRO_0000121191" description="Ras-related protein Rab-17">
    <location>
        <begin position="1"/>
        <end position="212"/>
    </location>
</feature>
<feature type="short sequence motif" description="Switch 1" evidence="3">
    <location>
        <begin position="43"/>
        <end position="54"/>
    </location>
</feature>
<feature type="short sequence motif" description="Switch 2" evidence="3">
    <location>
        <begin position="75"/>
        <end position="91"/>
    </location>
</feature>
<feature type="binding site" evidence="2">
    <location>
        <position position="31"/>
    </location>
    <ligand>
        <name>GTP</name>
        <dbReference type="ChEBI" id="CHEBI:37565"/>
    </ligand>
</feature>
<feature type="binding site" evidence="2">
    <location>
        <position position="32"/>
    </location>
    <ligand>
        <name>GTP</name>
        <dbReference type="ChEBI" id="CHEBI:37565"/>
    </ligand>
</feature>
<feature type="binding site" evidence="2">
    <location>
        <position position="33"/>
    </location>
    <ligand>
        <name>GTP</name>
        <dbReference type="ChEBI" id="CHEBI:37565"/>
    </ligand>
</feature>
<feature type="binding site" evidence="2">
    <location>
        <position position="33"/>
    </location>
    <ligand>
        <name>Mg(2+)</name>
        <dbReference type="ChEBI" id="CHEBI:18420"/>
    </ligand>
</feature>
<feature type="binding site" evidence="2">
    <location>
        <position position="50"/>
    </location>
    <ligand>
        <name>GTP</name>
        <dbReference type="ChEBI" id="CHEBI:37565"/>
    </ligand>
</feature>
<feature type="binding site" evidence="2">
    <location>
        <position position="50"/>
    </location>
    <ligand>
        <name>Mg(2+)</name>
        <dbReference type="ChEBI" id="CHEBI:18420"/>
    </ligand>
</feature>
<feature type="binding site" evidence="5">
    <location>
        <position position="73"/>
    </location>
    <ligand>
        <name>Mg(2+)</name>
        <dbReference type="ChEBI" id="CHEBI:18420"/>
    </ligand>
</feature>
<feature type="binding site" evidence="2">
    <location>
        <position position="76"/>
    </location>
    <ligand>
        <name>GTP</name>
        <dbReference type="ChEBI" id="CHEBI:37565"/>
    </ligand>
</feature>
<feature type="binding site" evidence="2">
    <location>
        <position position="132"/>
    </location>
    <ligand>
        <name>GTP</name>
        <dbReference type="ChEBI" id="CHEBI:37565"/>
    </ligand>
</feature>
<feature type="binding site" evidence="2">
    <location>
        <position position="133"/>
    </location>
    <ligand>
        <name>GTP</name>
        <dbReference type="ChEBI" id="CHEBI:37565"/>
    </ligand>
</feature>
<feature type="binding site" evidence="2">
    <location>
        <position position="135"/>
    </location>
    <ligand>
        <name>GTP</name>
        <dbReference type="ChEBI" id="CHEBI:37565"/>
    </ligand>
</feature>
<feature type="binding site" evidence="2">
    <location>
        <position position="163"/>
    </location>
    <ligand>
        <name>GTP</name>
        <dbReference type="ChEBI" id="CHEBI:37565"/>
    </ligand>
</feature>
<feature type="modified residue" description="Phosphoserine" evidence="4">
    <location>
        <position position="29"/>
    </location>
</feature>
<feature type="lipid moiety-binding region" description="S-geranylgeranyl cysteine" evidence="1">
    <location>
        <position position="209"/>
    </location>
</feature>
<feature type="lipid moiety-binding region" description="S-geranylgeranyl cysteine" evidence="1">
    <location>
        <position position="210"/>
    </location>
</feature>
<feature type="splice variant" id="VSP_056400" description="In isoform 2." evidence="9">
    <location>
        <begin position="1"/>
        <end position="127"/>
    </location>
</feature>
<feature type="sequence variant" id="VAR_051711" description="In dbSNP:rs3751112." evidence="8">
    <original>V</original>
    <variation>A</variation>
    <location>
        <position position="19"/>
    </location>
</feature>
<feature type="sequence variant" id="VAR_051712" description="In dbSNP:rs34311889.">
    <original>S</original>
    <variation>G</variation>
    <location>
        <position position="184"/>
    </location>
</feature>
<feature type="sequence variant" id="VAR_022102" description="In dbSNP:rs2280289.">
    <original>L</original>
    <variation>P</variation>
    <location>
        <position position="191"/>
    </location>
</feature>
<feature type="sequence conflict" description="In Ref. 1; CAB66580." evidence="10" ref="1">
    <original>L</original>
    <variation>P</variation>
    <location>
        <position position="157"/>
    </location>
</feature>
<sequence length="212" mass="23491">MAQAHRTPQPRAAPSQPRVFKLVLLGSGSVGKSSLALRYVKNDFKSILPTVGCAFFTKVVDVGATSLKLEIWDTAGQEKYHSVCHLYFRGANAALLVYDITRKDSFLKAQQWLKDLEEELHPGEVLVMLVGNKTDLSQEREVTFQEGKEFADSQKLLFMETSAKLNHQVSEVFNTVAQELLQRSDEEGQALRGDAAVALNKGPARQAKCCAH</sequence>
<reference key="1">
    <citation type="journal article" date="2001" name="Genome Res.">
        <title>Towards a catalog of human genes and proteins: sequencing and analysis of 500 novel complete protein coding human cDNAs.</title>
        <authorList>
            <person name="Wiemann S."/>
            <person name="Weil B."/>
            <person name="Wellenreuther R."/>
            <person name="Gassenhuber J."/>
            <person name="Glassl S."/>
            <person name="Ansorge W."/>
            <person name="Boecher M."/>
            <person name="Bloecker H."/>
            <person name="Bauersachs S."/>
            <person name="Blum H."/>
            <person name="Lauber J."/>
            <person name="Duesterhoeft A."/>
            <person name="Beyer A."/>
            <person name="Koehrer K."/>
            <person name="Strack N."/>
            <person name="Mewes H.-W."/>
            <person name="Ottenwaelder B."/>
            <person name="Obermaier B."/>
            <person name="Tampe J."/>
            <person name="Heubner D."/>
            <person name="Wambutt R."/>
            <person name="Korn B."/>
            <person name="Klein M."/>
            <person name="Poustka A."/>
        </authorList>
    </citation>
    <scope>NUCLEOTIDE SEQUENCE [LARGE SCALE MRNA] (ISOFORM 1)</scope>
    <source>
        <tissue>Brain</tissue>
    </source>
</reference>
<reference key="2">
    <citation type="journal article" date="2004" name="Nat. Genet.">
        <title>Complete sequencing and characterization of 21,243 full-length human cDNAs.</title>
        <authorList>
            <person name="Ota T."/>
            <person name="Suzuki Y."/>
            <person name="Nishikawa T."/>
            <person name="Otsuki T."/>
            <person name="Sugiyama T."/>
            <person name="Irie R."/>
            <person name="Wakamatsu A."/>
            <person name="Hayashi K."/>
            <person name="Sato H."/>
            <person name="Nagai K."/>
            <person name="Kimura K."/>
            <person name="Makita H."/>
            <person name="Sekine M."/>
            <person name="Obayashi M."/>
            <person name="Nishi T."/>
            <person name="Shibahara T."/>
            <person name="Tanaka T."/>
            <person name="Ishii S."/>
            <person name="Yamamoto J."/>
            <person name="Saito K."/>
            <person name="Kawai Y."/>
            <person name="Isono Y."/>
            <person name="Nakamura Y."/>
            <person name="Nagahari K."/>
            <person name="Murakami K."/>
            <person name="Yasuda T."/>
            <person name="Iwayanagi T."/>
            <person name="Wagatsuma M."/>
            <person name="Shiratori A."/>
            <person name="Sudo H."/>
            <person name="Hosoiri T."/>
            <person name="Kaku Y."/>
            <person name="Kodaira H."/>
            <person name="Kondo H."/>
            <person name="Sugawara M."/>
            <person name="Takahashi M."/>
            <person name="Kanda K."/>
            <person name="Yokoi T."/>
            <person name="Furuya T."/>
            <person name="Kikkawa E."/>
            <person name="Omura Y."/>
            <person name="Abe K."/>
            <person name="Kamihara K."/>
            <person name="Katsuta N."/>
            <person name="Sato K."/>
            <person name="Tanikawa M."/>
            <person name="Yamazaki M."/>
            <person name="Ninomiya K."/>
            <person name="Ishibashi T."/>
            <person name="Yamashita H."/>
            <person name="Murakawa K."/>
            <person name="Fujimori K."/>
            <person name="Tanai H."/>
            <person name="Kimata M."/>
            <person name="Watanabe M."/>
            <person name="Hiraoka S."/>
            <person name="Chiba Y."/>
            <person name="Ishida S."/>
            <person name="Ono Y."/>
            <person name="Takiguchi S."/>
            <person name="Watanabe S."/>
            <person name="Yosida M."/>
            <person name="Hotuta T."/>
            <person name="Kusano J."/>
            <person name="Kanehori K."/>
            <person name="Takahashi-Fujii A."/>
            <person name="Hara H."/>
            <person name="Tanase T.-O."/>
            <person name="Nomura Y."/>
            <person name="Togiya S."/>
            <person name="Komai F."/>
            <person name="Hara R."/>
            <person name="Takeuchi K."/>
            <person name="Arita M."/>
            <person name="Imose N."/>
            <person name="Musashino K."/>
            <person name="Yuuki H."/>
            <person name="Oshima A."/>
            <person name="Sasaki N."/>
            <person name="Aotsuka S."/>
            <person name="Yoshikawa Y."/>
            <person name="Matsunawa H."/>
            <person name="Ichihara T."/>
            <person name="Shiohata N."/>
            <person name="Sano S."/>
            <person name="Moriya S."/>
            <person name="Momiyama H."/>
            <person name="Satoh N."/>
            <person name="Takami S."/>
            <person name="Terashima Y."/>
            <person name="Suzuki O."/>
            <person name="Nakagawa S."/>
            <person name="Senoh A."/>
            <person name="Mizoguchi H."/>
            <person name="Goto Y."/>
            <person name="Shimizu F."/>
            <person name="Wakebe H."/>
            <person name="Hishigaki H."/>
            <person name="Watanabe T."/>
            <person name="Sugiyama A."/>
            <person name="Takemoto M."/>
            <person name="Kawakami B."/>
            <person name="Yamazaki M."/>
            <person name="Watanabe K."/>
            <person name="Kumagai A."/>
            <person name="Itakura S."/>
            <person name="Fukuzumi Y."/>
            <person name="Fujimori Y."/>
            <person name="Komiyama M."/>
            <person name="Tashiro H."/>
            <person name="Tanigami A."/>
            <person name="Fujiwara T."/>
            <person name="Ono T."/>
            <person name="Yamada K."/>
            <person name="Fujii Y."/>
            <person name="Ozaki K."/>
            <person name="Hirao M."/>
            <person name="Ohmori Y."/>
            <person name="Kawabata A."/>
            <person name="Hikiji T."/>
            <person name="Kobatake N."/>
            <person name="Inagaki H."/>
            <person name="Ikema Y."/>
            <person name="Okamoto S."/>
            <person name="Okitani R."/>
            <person name="Kawakami T."/>
            <person name="Noguchi S."/>
            <person name="Itoh T."/>
            <person name="Shigeta K."/>
            <person name="Senba T."/>
            <person name="Matsumura K."/>
            <person name="Nakajima Y."/>
            <person name="Mizuno T."/>
            <person name="Morinaga M."/>
            <person name="Sasaki M."/>
            <person name="Togashi T."/>
            <person name="Oyama M."/>
            <person name="Hata H."/>
            <person name="Watanabe M."/>
            <person name="Komatsu T."/>
            <person name="Mizushima-Sugano J."/>
            <person name="Satoh T."/>
            <person name="Shirai Y."/>
            <person name="Takahashi Y."/>
            <person name="Nakagawa K."/>
            <person name="Okumura K."/>
            <person name="Nagase T."/>
            <person name="Nomura N."/>
            <person name="Kikuchi H."/>
            <person name="Masuho Y."/>
            <person name="Yamashita R."/>
            <person name="Nakai K."/>
            <person name="Yada T."/>
            <person name="Nakamura Y."/>
            <person name="Ohara O."/>
            <person name="Isogai T."/>
            <person name="Sugano S."/>
        </authorList>
    </citation>
    <scope>NUCLEOTIDE SEQUENCE [LARGE SCALE MRNA] (ISOFORM 1)</scope>
</reference>
<reference key="3">
    <citation type="submission" date="2004-06" db="EMBL/GenBank/DDBJ databases">
        <title>Cloning of human full open reading frames in Gateway(TM) system entry vector (pDONR201).</title>
        <authorList>
            <person name="Ebert L."/>
            <person name="Schick M."/>
            <person name="Neubert P."/>
            <person name="Schatten R."/>
            <person name="Henze S."/>
            <person name="Korn B."/>
        </authorList>
    </citation>
    <scope>NUCLEOTIDE SEQUENCE [LARGE SCALE MRNA] (ISOFORM 1)</scope>
    <scope>VARIANT ALA-19</scope>
</reference>
<reference key="4">
    <citation type="journal article" date="2005" name="Nature">
        <title>Generation and annotation of the DNA sequences of human chromosomes 2 and 4.</title>
        <authorList>
            <person name="Hillier L.W."/>
            <person name="Graves T.A."/>
            <person name="Fulton R.S."/>
            <person name="Fulton L.A."/>
            <person name="Pepin K.H."/>
            <person name="Minx P."/>
            <person name="Wagner-McPherson C."/>
            <person name="Layman D."/>
            <person name="Wylie K."/>
            <person name="Sekhon M."/>
            <person name="Becker M.C."/>
            <person name="Fewell G.A."/>
            <person name="Delehaunty K.D."/>
            <person name="Miner T.L."/>
            <person name="Nash W.E."/>
            <person name="Kremitzki C."/>
            <person name="Oddy L."/>
            <person name="Du H."/>
            <person name="Sun H."/>
            <person name="Bradshaw-Cordum H."/>
            <person name="Ali J."/>
            <person name="Carter J."/>
            <person name="Cordes M."/>
            <person name="Harris A."/>
            <person name="Isak A."/>
            <person name="van Brunt A."/>
            <person name="Nguyen C."/>
            <person name="Du F."/>
            <person name="Courtney L."/>
            <person name="Kalicki J."/>
            <person name="Ozersky P."/>
            <person name="Abbott S."/>
            <person name="Armstrong J."/>
            <person name="Belter E.A."/>
            <person name="Caruso L."/>
            <person name="Cedroni M."/>
            <person name="Cotton M."/>
            <person name="Davidson T."/>
            <person name="Desai A."/>
            <person name="Elliott G."/>
            <person name="Erb T."/>
            <person name="Fronick C."/>
            <person name="Gaige T."/>
            <person name="Haakenson W."/>
            <person name="Haglund K."/>
            <person name="Holmes A."/>
            <person name="Harkins R."/>
            <person name="Kim K."/>
            <person name="Kruchowski S.S."/>
            <person name="Strong C.M."/>
            <person name="Grewal N."/>
            <person name="Goyea E."/>
            <person name="Hou S."/>
            <person name="Levy A."/>
            <person name="Martinka S."/>
            <person name="Mead K."/>
            <person name="McLellan M.D."/>
            <person name="Meyer R."/>
            <person name="Randall-Maher J."/>
            <person name="Tomlinson C."/>
            <person name="Dauphin-Kohlberg S."/>
            <person name="Kozlowicz-Reilly A."/>
            <person name="Shah N."/>
            <person name="Swearengen-Shahid S."/>
            <person name="Snider J."/>
            <person name="Strong J.T."/>
            <person name="Thompson J."/>
            <person name="Yoakum M."/>
            <person name="Leonard S."/>
            <person name="Pearman C."/>
            <person name="Trani L."/>
            <person name="Radionenko M."/>
            <person name="Waligorski J.E."/>
            <person name="Wang C."/>
            <person name="Rock S.M."/>
            <person name="Tin-Wollam A.-M."/>
            <person name="Maupin R."/>
            <person name="Latreille P."/>
            <person name="Wendl M.C."/>
            <person name="Yang S.-P."/>
            <person name="Pohl C."/>
            <person name="Wallis J.W."/>
            <person name="Spieth J."/>
            <person name="Bieri T.A."/>
            <person name="Berkowicz N."/>
            <person name="Nelson J.O."/>
            <person name="Osborne J."/>
            <person name="Ding L."/>
            <person name="Meyer R."/>
            <person name="Sabo A."/>
            <person name="Shotland Y."/>
            <person name="Sinha P."/>
            <person name="Wohldmann P.E."/>
            <person name="Cook L.L."/>
            <person name="Hickenbotham M.T."/>
            <person name="Eldred J."/>
            <person name="Williams D."/>
            <person name="Jones T.A."/>
            <person name="She X."/>
            <person name="Ciccarelli F.D."/>
            <person name="Izaurralde E."/>
            <person name="Taylor J."/>
            <person name="Schmutz J."/>
            <person name="Myers R.M."/>
            <person name="Cox D.R."/>
            <person name="Huang X."/>
            <person name="McPherson J.D."/>
            <person name="Mardis E.R."/>
            <person name="Clifton S.W."/>
            <person name="Warren W.C."/>
            <person name="Chinwalla A.T."/>
            <person name="Eddy S.R."/>
            <person name="Marra M.A."/>
            <person name="Ovcharenko I."/>
            <person name="Furey T.S."/>
            <person name="Miller W."/>
            <person name="Eichler E.E."/>
            <person name="Bork P."/>
            <person name="Suyama M."/>
            <person name="Torrents D."/>
            <person name="Waterston R.H."/>
            <person name="Wilson R.K."/>
        </authorList>
    </citation>
    <scope>NUCLEOTIDE SEQUENCE [LARGE SCALE GENOMIC DNA]</scope>
</reference>
<reference key="5">
    <citation type="submission" date="2005-07" db="EMBL/GenBank/DDBJ databases">
        <authorList>
            <person name="Mural R.J."/>
            <person name="Istrail S."/>
            <person name="Sutton G.G."/>
            <person name="Florea L."/>
            <person name="Halpern A.L."/>
            <person name="Mobarry C.M."/>
            <person name="Lippert R."/>
            <person name="Walenz B."/>
            <person name="Shatkay H."/>
            <person name="Dew I."/>
            <person name="Miller J.R."/>
            <person name="Flanigan M.J."/>
            <person name="Edwards N.J."/>
            <person name="Bolanos R."/>
            <person name="Fasulo D."/>
            <person name="Halldorsson B.V."/>
            <person name="Hannenhalli S."/>
            <person name="Turner R."/>
            <person name="Yooseph S."/>
            <person name="Lu F."/>
            <person name="Nusskern D.R."/>
            <person name="Shue B.C."/>
            <person name="Zheng X.H."/>
            <person name="Zhong F."/>
            <person name="Delcher A.L."/>
            <person name="Huson D.H."/>
            <person name="Kravitz S.A."/>
            <person name="Mouchard L."/>
            <person name="Reinert K."/>
            <person name="Remington K.A."/>
            <person name="Clark A.G."/>
            <person name="Waterman M.S."/>
            <person name="Eichler E.E."/>
            <person name="Adams M.D."/>
            <person name="Hunkapiller M.W."/>
            <person name="Myers E.W."/>
            <person name="Venter J.C."/>
        </authorList>
    </citation>
    <scope>NUCLEOTIDE SEQUENCE [LARGE SCALE GENOMIC DNA]</scope>
</reference>
<reference key="6">
    <citation type="journal article" date="2004" name="Genome Res.">
        <title>The status, quality, and expansion of the NIH full-length cDNA project: the Mammalian Gene Collection (MGC).</title>
        <authorList>
            <consortium name="The MGC Project Team"/>
        </authorList>
    </citation>
    <scope>NUCLEOTIDE SEQUENCE [LARGE SCALE MRNA] (ISOFORMS 1 AND 2)</scope>
    <source>
        <tissue>Colon</tissue>
        <tissue>Eye</tissue>
        <tissue>Ovary</tissue>
        <tissue>Placenta</tissue>
    </source>
</reference>
<reference key="7">
    <citation type="journal article" date="2011" name="Traffic">
        <title>The recycling endosome protein Rab17 regulates melanocytic filopodia formation and melanosome trafficking.</title>
        <authorList>
            <person name="Beaumont K.A."/>
            <person name="Hamilton N.A."/>
            <person name="Moores M.T."/>
            <person name="Brown D.L."/>
            <person name="Ohbayashi N."/>
            <person name="Cairncross O."/>
            <person name="Cook A.L."/>
            <person name="Smith A.G."/>
            <person name="Misaki R."/>
            <person name="Fukuda M."/>
            <person name="Taguchi T."/>
            <person name="Sturm R.A."/>
            <person name="Stow J.L."/>
        </authorList>
    </citation>
    <scope>TISSUE SPECIFICITY</scope>
    <scope>INDUCTION BY FORSKOLIN</scope>
</reference>
<reference key="8">
    <citation type="journal article" date="2012" name="J. Cell Sci.">
        <title>ERK2 drives tumour cell migration in three-dimensional microenvironments by suppressing expression of Rab17 and liprin-beta2.</title>
        <authorList>
            <person name="von Thun A."/>
            <person name="Birtwistle M."/>
            <person name="Kalna G."/>
            <person name="Grindlay J."/>
            <person name="Strachan D."/>
            <person name="Kolch W."/>
            <person name="von Kriegsheim A."/>
            <person name="Norman J.C."/>
        </authorList>
    </citation>
    <scope>FUNCTION IN CELL MIGRATION</scope>
</reference>
<reference key="9">
    <citation type="journal article" date="2014" name="J. Proteomics">
        <title>An enzyme assisted RP-RPLC approach for in-depth analysis of human liver phosphoproteome.</title>
        <authorList>
            <person name="Bian Y."/>
            <person name="Song C."/>
            <person name="Cheng K."/>
            <person name="Dong M."/>
            <person name="Wang F."/>
            <person name="Huang J."/>
            <person name="Sun D."/>
            <person name="Wang L."/>
            <person name="Ye M."/>
            <person name="Zou H."/>
        </authorList>
    </citation>
    <scope>IDENTIFICATION BY MASS SPECTROMETRY [LARGE SCALE ANALYSIS]</scope>
    <source>
        <tissue>Liver</tissue>
    </source>
</reference>
<evidence type="ECO:0000250" key="1"/>
<evidence type="ECO:0000250" key="2">
    <source>
        <dbReference type="UniProtKB" id="P20338"/>
    </source>
</evidence>
<evidence type="ECO:0000250" key="3">
    <source>
        <dbReference type="UniProtKB" id="P20339"/>
    </source>
</evidence>
<evidence type="ECO:0000250" key="4">
    <source>
        <dbReference type="UniProtKB" id="P35292"/>
    </source>
</evidence>
<evidence type="ECO:0000250" key="5">
    <source>
        <dbReference type="UniProtKB" id="P61018"/>
    </source>
</evidence>
<evidence type="ECO:0000269" key="6">
    <source>
    </source>
</evidence>
<evidence type="ECO:0000269" key="7">
    <source>
    </source>
</evidence>
<evidence type="ECO:0000269" key="8">
    <source ref="3"/>
</evidence>
<evidence type="ECO:0000303" key="9">
    <source>
    </source>
</evidence>
<evidence type="ECO:0000305" key="10"/>
<evidence type="ECO:0000312" key="11">
    <source>
        <dbReference type="HGNC" id="HGNC:16523"/>
    </source>
</evidence>
<organism>
    <name type="scientific">Homo sapiens</name>
    <name type="common">Human</name>
    <dbReference type="NCBI Taxonomy" id="9606"/>
    <lineage>
        <taxon>Eukaryota</taxon>
        <taxon>Metazoa</taxon>
        <taxon>Chordata</taxon>
        <taxon>Craniata</taxon>
        <taxon>Vertebrata</taxon>
        <taxon>Euteleostomi</taxon>
        <taxon>Mammalia</taxon>
        <taxon>Eutheria</taxon>
        <taxon>Euarchontoglires</taxon>
        <taxon>Primates</taxon>
        <taxon>Haplorrhini</taxon>
        <taxon>Catarrhini</taxon>
        <taxon>Hominidae</taxon>
        <taxon>Homo</taxon>
    </lineage>
</organism>